<comment type="function">
    <text evidence="1">Allows the formation of correctly charged Asn-tRNA(Asn) or Gln-tRNA(Gln) through the transamidation of misacylated Asp-tRNA(Asn) or Glu-tRNA(Gln) in organisms which lack either or both of asparaginyl-tRNA or glutaminyl-tRNA synthetases. The reaction takes place in the presence of glutamine and ATP through an activated phospho-Asp-tRNA(Asn) or phospho-Glu-tRNA(Gln).</text>
</comment>
<comment type="catalytic activity">
    <reaction evidence="1">
        <text>L-glutamyl-tRNA(Gln) + L-glutamine + ATP + H2O = L-glutaminyl-tRNA(Gln) + L-glutamate + ADP + phosphate + H(+)</text>
        <dbReference type="Rhea" id="RHEA:17521"/>
        <dbReference type="Rhea" id="RHEA-COMP:9681"/>
        <dbReference type="Rhea" id="RHEA-COMP:9684"/>
        <dbReference type="ChEBI" id="CHEBI:15377"/>
        <dbReference type="ChEBI" id="CHEBI:15378"/>
        <dbReference type="ChEBI" id="CHEBI:29985"/>
        <dbReference type="ChEBI" id="CHEBI:30616"/>
        <dbReference type="ChEBI" id="CHEBI:43474"/>
        <dbReference type="ChEBI" id="CHEBI:58359"/>
        <dbReference type="ChEBI" id="CHEBI:78520"/>
        <dbReference type="ChEBI" id="CHEBI:78521"/>
        <dbReference type="ChEBI" id="CHEBI:456216"/>
    </reaction>
</comment>
<comment type="catalytic activity">
    <reaction evidence="1">
        <text>L-aspartyl-tRNA(Asn) + L-glutamine + ATP + H2O = L-asparaginyl-tRNA(Asn) + L-glutamate + ADP + phosphate + 2 H(+)</text>
        <dbReference type="Rhea" id="RHEA:14513"/>
        <dbReference type="Rhea" id="RHEA-COMP:9674"/>
        <dbReference type="Rhea" id="RHEA-COMP:9677"/>
        <dbReference type="ChEBI" id="CHEBI:15377"/>
        <dbReference type="ChEBI" id="CHEBI:15378"/>
        <dbReference type="ChEBI" id="CHEBI:29985"/>
        <dbReference type="ChEBI" id="CHEBI:30616"/>
        <dbReference type="ChEBI" id="CHEBI:43474"/>
        <dbReference type="ChEBI" id="CHEBI:58359"/>
        <dbReference type="ChEBI" id="CHEBI:78515"/>
        <dbReference type="ChEBI" id="CHEBI:78516"/>
        <dbReference type="ChEBI" id="CHEBI:456216"/>
    </reaction>
</comment>
<comment type="subunit">
    <text evidence="1">Heterotrimer of A, B and C subunits.</text>
</comment>
<comment type="similarity">
    <text evidence="1">Belongs to the GatB/GatE family. GatB subfamily.</text>
</comment>
<keyword id="KW-0067">ATP-binding</keyword>
<keyword id="KW-0436">Ligase</keyword>
<keyword id="KW-0547">Nucleotide-binding</keyword>
<keyword id="KW-0648">Protein biosynthesis</keyword>
<keyword id="KW-1185">Reference proteome</keyword>
<proteinExistence type="inferred from homology"/>
<name>GATB_CROS5</name>
<organism>
    <name type="scientific">Crocosphaera subtropica (strain ATCC 51142 / BH68)</name>
    <name type="common">Cyanothece sp. (strain ATCC 51142)</name>
    <dbReference type="NCBI Taxonomy" id="43989"/>
    <lineage>
        <taxon>Bacteria</taxon>
        <taxon>Bacillati</taxon>
        <taxon>Cyanobacteriota</taxon>
        <taxon>Cyanophyceae</taxon>
        <taxon>Oscillatoriophycideae</taxon>
        <taxon>Chroococcales</taxon>
        <taxon>Aphanothecaceae</taxon>
        <taxon>Crocosphaera</taxon>
        <taxon>Crocosphaera subtropica</taxon>
    </lineage>
</organism>
<feature type="chain" id="PRO_1000095209" description="Aspartyl/glutamyl-tRNA(Asn/Gln) amidotransferase subunit B">
    <location>
        <begin position="1"/>
        <end position="495"/>
    </location>
</feature>
<accession>B1WYK7</accession>
<reference key="1">
    <citation type="journal article" date="2008" name="Proc. Natl. Acad. Sci. U.S.A.">
        <title>The genome of Cyanothece 51142, a unicellular diazotrophic cyanobacterium important in the marine nitrogen cycle.</title>
        <authorList>
            <person name="Welsh E.A."/>
            <person name="Liberton M."/>
            <person name="Stoeckel J."/>
            <person name="Loh T."/>
            <person name="Elvitigala T."/>
            <person name="Wang C."/>
            <person name="Wollam A."/>
            <person name="Fulton R.S."/>
            <person name="Clifton S.W."/>
            <person name="Jacobs J.M."/>
            <person name="Aurora R."/>
            <person name="Ghosh B.K."/>
            <person name="Sherman L.A."/>
            <person name="Smith R.D."/>
            <person name="Wilson R.K."/>
            <person name="Pakrasi H.B."/>
        </authorList>
    </citation>
    <scope>NUCLEOTIDE SEQUENCE [LARGE SCALE GENOMIC DNA]</scope>
    <source>
        <strain>ATCC 51142 / BH68</strain>
    </source>
</reference>
<evidence type="ECO:0000255" key="1">
    <source>
        <dbReference type="HAMAP-Rule" id="MF_00121"/>
    </source>
</evidence>
<protein>
    <recommendedName>
        <fullName evidence="1">Aspartyl/glutamyl-tRNA(Asn/Gln) amidotransferase subunit B</fullName>
        <shortName evidence="1">Asp/Glu-ADT subunit B</shortName>
        <ecNumber evidence="1">6.3.5.-</ecNumber>
    </recommendedName>
</protein>
<gene>
    <name evidence="1" type="primary">gatB</name>
    <name type="ordered locus">cce_1674</name>
</gene>
<dbReference type="EC" id="6.3.5.-" evidence="1"/>
<dbReference type="EMBL" id="CP000806">
    <property type="protein sequence ID" value="ACB51024.1"/>
    <property type="molecule type" value="Genomic_DNA"/>
</dbReference>
<dbReference type="RefSeq" id="WP_009544472.1">
    <property type="nucleotide sequence ID" value="NC_010546.1"/>
</dbReference>
<dbReference type="SMR" id="B1WYK7"/>
<dbReference type="STRING" id="43989.cce_1674"/>
<dbReference type="KEGG" id="cyt:cce_1674"/>
<dbReference type="eggNOG" id="COG0064">
    <property type="taxonomic scope" value="Bacteria"/>
</dbReference>
<dbReference type="HOGENOM" id="CLU_019240_0_0_3"/>
<dbReference type="OrthoDB" id="9804078at2"/>
<dbReference type="Proteomes" id="UP000001203">
    <property type="component" value="Chromosome circular"/>
</dbReference>
<dbReference type="GO" id="GO:0050566">
    <property type="term" value="F:asparaginyl-tRNA synthase (glutamine-hydrolyzing) activity"/>
    <property type="evidence" value="ECO:0007669"/>
    <property type="project" value="RHEA"/>
</dbReference>
<dbReference type="GO" id="GO:0005524">
    <property type="term" value="F:ATP binding"/>
    <property type="evidence" value="ECO:0007669"/>
    <property type="project" value="UniProtKB-KW"/>
</dbReference>
<dbReference type="GO" id="GO:0050567">
    <property type="term" value="F:glutaminyl-tRNA synthase (glutamine-hydrolyzing) activity"/>
    <property type="evidence" value="ECO:0007669"/>
    <property type="project" value="UniProtKB-UniRule"/>
</dbReference>
<dbReference type="GO" id="GO:0070681">
    <property type="term" value="P:glutaminyl-tRNAGln biosynthesis via transamidation"/>
    <property type="evidence" value="ECO:0007669"/>
    <property type="project" value="TreeGrafter"/>
</dbReference>
<dbReference type="GO" id="GO:0006412">
    <property type="term" value="P:translation"/>
    <property type="evidence" value="ECO:0007669"/>
    <property type="project" value="UniProtKB-UniRule"/>
</dbReference>
<dbReference type="FunFam" id="1.10.10.410:FF:000001">
    <property type="entry name" value="Aspartyl/glutamyl-tRNA(Asn/Gln) amidotransferase subunit B"/>
    <property type="match status" value="1"/>
</dbReference>
<dbReference type="FunFam" id="1.10.150.380:FF:000001">
    <property type="entry name" value="Aspartyl/glutamyl-tRNA(Asn/Gln) amidotransferase subunit B"/>
    <property type="match status" value="1"/>
</dbReference>
<dbReference type="Gene3D" id="1.10.10.410">
    <property type="match status" value="1"/>
</dbReference>
<dbReference type="Gene3D" id="1.10.150.380">
    <property type="entry name" value="GatB domain, N-terminal subdomain"/>
    <property type="match status" value="1"/>
</dbReference>
<dbReference type="HAMAP" id="MF_00121">
    <property type="entry name" value="GatB"/>
    <property type="match status" value="1"/>
</dbReference>
<dbReference type="InterPro" id="IPR017959">
    <property type="entry name" value="Asn/Gln-tRNA_amidoTrfase_suB/E"/>
</dbReference>
<dbReference type="InterPro" id="IPR006075">
    <property type="entry name" value="Asn/Gln-tRNA_Trfase_suB/E_cat"/>
</dbReference>
<dbReference type="InterPro" id="IPR018027">
    <property type="entry name" value="Asn/Gln_amidotransferase"/>
</dbReference>
<dbReference type="InterPro" id="IPR003789">
    <property type="entry name" value="Asn/Gln_tRNA_amidoTrase-B-like"/>
</dbReference>
<dbReference type="InterPro" id="IPR004413">
    <property type="entry name" value="GatB"/>
</dbReference>
<dbReference type="InterPro" id="IPR042114">
    <property type="entry name" value="GatB_C_1"/>
</dbReference>
<dbReference type="InterPro" id="IPR023168">
    <property type="entry name" value="GatB_Yqey_C_2"/>
</dbReference>
<dbReference type="InterPro" id="IPR017958">
    <property type="entry name" value="Gln-tRNA_amidoTrfase_suB_CS"/>
</dbReference>
<dbReference type="InterPro" id="IPR014746">
    <property type="entry name" value="Gln_synth/guanido_kin_cat_dom"/>
</dbReference>
<dbReference type="NCBIfam" id="TIGR00133">
    <property type="entry name" value="gatB"/>
    <property type="match status" value="1"/>
</dbReference>
<dbReference type="NCBIfam" id="NF004012">
    <property type="entry name" value="PRK05477.1-2"/>
    <property type="match status" value="1"/>
</dbReference>
<dbReference type="NCBIfam" id="NF004014">
    <property type="entry name" value="PRK05477.1-4"/>
    <property type="match status" value="1"/>
</dbReference>
<dbReference type="NCBIfam" id="NF004015">
    <property type="entry name" value="PRK05477.1-5"/>
    <property type="match status" value="1"/>
</dbReference>
<dbReference type="PANTHER" id="PTHR11659">
    <property type="entry name" value="GLUTAMYL-TRNA GLN AMIDOTRANSFERASE SUBUNIT B MITOCHONDRIAL AND PROKARYOTIC PET112-RELATED"/>
    <property type="match status" value="1"/>
</dbReference>
<dbReference type="PANTHER" id="PTHR11659:SF0">
    <property type="entry name" value="GLUTAMYL-TRNA(GLN) AMIDOTRANSFERASE SUBUNIT B, MITOCHONDRIAL"/>
    <property type="match status" value="1"/>
</dbReference>
<dbReference type="Pfam" id="PF02934">
    <property type="entry name" value="GatB_N"/>
    <property type="match status" value="1"/>
</dbReference>
<dbReference type="Pfam" id="PF02637">
    <property type="entry name" value="GatB_Yqey"/>
    <property type="match status" value="1"/>
</dbReference>
<dbReference type="SMART" id="SM00845">
    <property type="entry name" value="GatB_Yqey"/>
    <property type="match status" value="1"/>
</dbReference>
<dbReference type="SUPFAM" id="SSF89095">
    <property type="entry name" value="GatB/YqeY motif"/>
    <property type="match status" value="1"/>
</dbReference>
<dbReference type="SUPFAM" id="SSF55931">
    <property type="entry name" value="Glutamine synthetase/guanido kinase"/>
    <property type="match status" value="1"/>
</dbReference>
<dbReference type="PROSITE" id="PS01234">
    <property type="entry name" value="GATB"/>
    <property type="match status" value="1"/>
</dbReference>
<sequence>MTTATPVKTEYEAIIGLETHCQLNTTSKIFCNCSTEFDSPPNTNVCPICLGYPGVLPVLNEEVLASAVKLGLALNAKIAPYSKFDRKQYFYPDLPKNYQISQFDLPIVEHGSLEIELVDKKSKEVTRKTIGITRLHMEEDAGKLVHAGSDRLAGSTHSLVDFNRTGVPLLEIVSEPDIRSGQEAAEYAQELRRLVRYLGISDGNMQEGSLRCDVNISVRPVGQKEFGTKVEIKNMNSFSAIQKAIEYEIERQIEAVENGDPIYQETRLWDESNQETISMRKKEGSSDYRYFPEPDLPPLEVSEEKLNAWKQELPELPAQKRKRYEEALGLSAYDARVLTDDREVAEYYETAVNTGADAKLVANWVTQDIAAYLNNSKLSIIEIALKPDSLGELVQLIEKGTISGKIAKEILPELLEKGGSPKKIVESKGMTQISDPAEIEKVIEALMEANPSEVEKYRGGKKKLKGFFVGQVMKETGGRADPKLTNQLAEKLLNG</sequence>